<comment type="function">
    <text evidence="1">NDH-1 shuttles electrons from NADH, via FMN and iron-sulfur (Fe-S) centers, to quinones in the respiratory chain. The immediate electron acceptor for the enzyme in this species is believed to be menaquinone. Couples the redox reaction to proton translocation (for every two electrons transferred, four hydrogen ions are translocated across the cytoplasmic membrane), and thus conserves the redox energy in a proton gradient. This subunit may bind ubiquinone (By similarity).</text>
</comment>
<comment type="catalytic activity">
    <reaction evidence="1">
        <text>a quinone + NADH + 5 H(+)(in) = a quinol + NAD(+) + 4 H(+)(out)</text>
        <dbReference type="Rhea" id="RHEA:57888"/>
        <dbReference type="ChEBI" id="CHEBI:15378"/>
        <dbReference type="ChEBI" id="CHEBI:24646"/>
        <dbReference type="ChEBI" id="CHEBI:57540"/>
        <dbReference type="ChEBI" id="CHEBI:57945"/>
        <dbReference type="ChEBI" id="CHEBI:132124"/>
    </reaction>
</comment>
<comment type="subunit">
    <text evidence="1">NDH-1 is composed of 14 different subunits. Subunits NuoA, H, J, K, L, M, N constitute the membrane sector of the complex.</text>
</comment>
<comment type="subcellular location">
    <subcellularLocation>
        <location evidence="1">Cell membrane</location>
        <topology evidence="1">Multi-pass membrane protein</topology>
    </subcellularLocation>
</comment>
<comment type="similarity">
    <text evidence="1">Belongs to the complex I subunit 1 family.</text>
</comment>
<proteinExistence type="inferred from homology"/>
<gene>
    <name evidence="1" type="primary">nuoH</name>
    <name type="ordered locus">MAV_4040</name>
</gene>
<sequence>MTTPLTAFGHDPWWLVLGKALAIFVFLMLNVLVAILLERKILGWMQLRPGPNRVGPWGVLQSLADGIKLALKETITPGGVDKFVYFAAPVISTIPAFTAFAFIPFGPVVSVFGHRTPLQLTDLPVAVLFILGLSAIGVYGIVLGGWASGSTYPLLGGVRSTAQVISYEVAMGLSFAAVFLYAGSMSTSQIVAAQDRVWFVFLLLPSFVIYLISMVGETNRAPFDLPEAEGELVAGFHTEYSSLKFAMFMLAEYVNMMTVSSLATALFFGGWHAPWPLNMWAGANTGWWPVLWFTAKMWTFLFIYFWLRASLPRLRYDQFMGLGWKLLIPASLVWVLIAAVIRTLQNQGYAHWTPILVISSIVFAAALVLSLRKPFTTPHIRALRRAAAPPGQAAAHRAGFHPGIPDTAAAGESAGGRE</sequence>
<organism>
    <name type="scientific">Mycobacterium avium (strain 104)</name>
    <dbReference type="NCBI Taxonomy" id="243243"/>
    <lineage>
        <taxon>Bacteria</taxon>
        <taxon>Bacillati</taxon>
        <taxon>Actinomycetota</taxon>
        <taxon>Actinomycetes</taxon>
        <taxon>Mycobacteriales</taxon>
        <taxon>Mycobacteriaceae</taxon>
        <taxon>Mycobacterium</taxon>
        <taxon>Mycobacterium avium complex (MAC)</taxon>
    </lineage>
</organism>
<protein>
    <recommendedName>
        <fullName evidence="1">NADH-quinone oxidoreductase subunit H</fullName>
        <ecNumber evidence="1">7.1.1.-</ecNumber>
    </recommendedName>
    <alternativeName>
        <fullName evidence="1">NADH dehydrogenase I subunit H</fullName>
    </alternativeName>
    <alternativeName>
        <fullName evidence="1">NDH-1 subunit H</fullName>
    </alternativeName>
</protein>
<evidence type="ECO:0000255" key="1">
    <source>
        <dbReference type="HAMAP-Rule" id="MF_01350"/>
    </source>
</evidence>
<evidence type="ECO:0000256" key="2">
    <source>
        <dbReference type="SAM" id="MobiDB-lite"/>
    </source>
</evidence>
<dbReference type="EC" id="7.1.1.-" evidence="1"/>
<dbReference type="EMBL" id="CP000479">
    <property type="protein sequence ID" value="ABK69425.1"/>
    <property type="molecule type" value="Genomic_DNA"/>
</dbReference>
<dbReference type="SMR" id="A0QJV4"/>
<dbReference type="KEGG" id="mav:MAV_4040"/>
<dbReference type="HOGENOM" id="CLU_015134_0_0_11"/>
<dbReference type="Proteomes" id="UP000001574">
    <property type="component" value="Chromosome"/>
</dbReference>
<dbReference type="GO" id="GO:0005886">
    <property type="term" value="C:plasma membrane"/>
    <property type="evidence" value="ECO:0007669"/>
    <property type="project" value="UniProtKB-SubCell"/>
</dbReference>
<dbReference type="GO" id="GO:0003954">
    <property type="term" value="F:NADH dehydrogenase activity"/>
    <property type="evidence" value="ECO:0007669"/>
    <property type="project" value="TreeGrafter"/>
</dbReference>
<dbReference type="GO" id="GO:0016655">
    <property type="term" value="F:oxidoreductase activity, acting on NAD(P)H, quinone or similar compound as acceptor"/>
    <property type="evidence" value="ECO:0007669"/>
    <property type="project" value="UniProtKB-UniRule"/>
</dbReference>
<dbReference type="GO" id="GO:0048038">
    <property type="term" value="F:quinone binding"/>
    <property type="evidence" value="ECO:0007669"/>
    <property type="project" value="UniProtKB-KW"/>
</dbReference>
<dbReference type="GO" id="GO:0009060">
    <property type="term" value="P:aerobic respiration"/>
    <property type="evidence" value="ECO:0007669"/>
    <property type="project" value="TreeGrafter"/>
</dbReference>
<dbReference type="HAMAP" id="MF_01350">
    <property type="entry name" value="NDH1_NuoH"/>
    <property type="match status" value="1"/>
</dbReference>
<dbReference type="InterPro" id="IPR001694">
    <property type="entry name" value="NADH_UbQ_OxRdtase_su1/FPO"/>
</dbReference>
<dbReference type="InterPro" id="IPR018086">
    <property type="entry name" value="NADH_UbQ_OxRdtase_su1_CS"/>
</dbReference>
<dbReference type="NCBIfam" id="NF004741">
    <property type="entry name" value="PRK06076.1-2"/>
    <property type="match status" value="1"/>
</dbReference>
<dbReference type="NCBIfam" id="NF004743">
    <property type="entry name" value="PRK06076.1-4"/>
    <property type="match status" value="1"/>
</dbReference>
<dbReference type="PANTHER" id="PTHR11432">
    <property type="entry name" value="NADH DEHYDROGENASE SUBUNIT 1"/>
    <property type="match status" value="1"/>
</dbReference>
<dbReference type="PANTHER" id="PTHR11432:SF3">
    <property type="entry name" value="NADH-UBIQUINONE OXIDOREDUCTASE CHAIN 1"/>
    <property type="match status" value="1"/>
</dbReference>
<dbReference type="Pfam" id="PF00146">
    <property type="entry name" value="NADHdh"/>
    <property type="match status" value="1"/>
</dbReference>
<dbReference type="PROSITE" id="PS00667">
    <property type="entry name" value="COMPLEX1_ND1_1"/>
    <property type="match status" value="1"/>
</dbReference>
<dbReference type="PROSITE" id="PS00668">
    <property type="entry name" value="COMPLEX1_ND1_2"/>
    <property type="match status" value="1"/>
</dbReference>
<keyword id="KW-1003">Cell membrane</keyword>
<keyword id="KW-0472">Membrane</keyword>
<keyword id="KW-0520">NAD</keyword>
<keyword id="KW-0874">Quinone</keyword>
<keyword id="KW-1278">Translocase</keyword>
<keyword id="KW-0812">Transmembrane</keyword>
<keyword id="KW-1133">Transmembrane helix</keyword>
<reference key="1">
    <citation type="submission" date="2006-10" db="EMBL/GenBank/DDBJ databases">
        <authorList>
            <person name="Fleischmann R.D."/>
            <person name="Dodson R.J."/>
            <person name="Haft D.H."/>
            <person name="Merkel J.S."/>
            <person name="Nelson W.C."/>
            <person name="Fraser C.M."/>
        </authorList>
    </citation>
    <scope>NUCLEOTIDE SEQUENCE [LARGE SCALE GENOMIC DNA]</scope>
    <source>
        <strain>104</strain>
    </source>
</reference>
<accession>A0QJV4</accession>
<name>NUOH_MYCA1</name>
<feature type="chain" id="PRO_0000298826" description="NADH-quinone oxidoreductase subunit H">
    <location>
        <begin position="1"/>
        <end position="418"/>
    </location>
</feature>
<feature type="transmembrane region" description="Helical" evidence="1">
    <location>
        <begin position="15"/>
        <end position="35"/>
    </location>
</feature>
<feature type="transmembrane region" description="Helical" evidence="1">
    <location>
        <begin position="83"/>
        <end position="103"/>
    </location>
</feature>
<feature type="transmembrane region" description="Helical" evidence="1">
    <location>
        <begin position="123"/>
        <end position="143"/>
    </location>
</feature>
<feature type="transmembrane region" description="Helical" evidence="1">
    <location>
        <begin position="164"/>
        <end position="184"/>
    </location>
</feature>
<feature type="transmembrane region" description="Helical" evidence="1">
    <location>
        <begin position="197"/>
        <end position="217"/>
    </location>
</feature>
<feature type="transmembrane region" description="Helical" evidence="1">
    <location>
        <begin position="262"/>
        <end position="282"/>
    </location>
</feature>
<feature type="transmembrane region" description="Helical" evidence="1">
    <location>
        <begin position="287"/>
        <end position="307"/>
    </location>
</feature>
<feature type="transmembrane region" description="Helical" evidence="1">
    <location>
        <begin position="321"/>
        <end position="341"/>
    </location>
</feature>
<feature type="transmembrane region" description="Helical" evidence="1">
    <location>
        <begin position="349"/>
        <end position="369"/>
    </location>
</feature>
<feature type="region of interest" description="Disordered" evidence="2">
    <location>
        <begin position="394"/>
        <end position="418"/>
    </location>
</feature>